<keyword id="KW-0963">Cytoplasm</keyword>
<keyword id="KW-0444">Lipid biosynthesis</keyword>
<keyword id="KW-0443">Lipid metabolism</keyword>
<keyword id="KW-0520">NAD</keyword>
<keyword id="KW-0521">NADP</keyword>
<keyword id="KW-0547">Nucleotide-binding</keyword>
<keyword id="KW-0560">Oxidoreductase</keyword>
<keyword id="KW-0594">Phospholipid biosynthesis</keyword>
<keyword id="KW-1208">Phospholipid metabolism</keyword>
<keyword id="KW-1185">Reference proteome</keyword>
<protein>
    <recommendedName>
        <fullName evidence="1">Glycerol-3-phosphate dehydrogenase [NAD(P)+]</fullName>
        <ecNumber evidence="1">1.1.1.94</ecNumber>
    </recommendedName>
    <alternativeName>
        <fullName evidence="1">NAD(P)(+)-dependent glycerol-3-phosphate dehydrogenase</fullName>
    </alternativeName>
    <alternativeName>
        <fullName evidence="1">NAD(P)H-dependent dihydroxyacetone-phosphate reductase</fullName>
    </alternativeName>
</protein>
<name>GPDA_NITEU</name>
<accession>Q82SU6</accession>
<proteinExistence type="inferred from homology"/>
<sequence>MNIAVLGAGAWGTALAICLSARHRVTLWTRNVEHLAELAALRTNQRYLPRQPLPDSIHLVSALSEALERAELVFVVVPVAGLRTTLQQMVALNPSLPLILACKGFETGSAKLPCQVVEEVYPASITCGVLSGPSFAREVAQGLPAALTLASHDEIFARSVAGEIRTASLRVYSGNDVIGVEVGGALKNVIAIAAGISDGIAFGNNARAALITRGLAEITRLGMALGGCRETFTGLTGIGDLILTCTGNLSRNRRVGMMLAAGRQLAEILPEIGHVTEGVYTVREAYGLGQRLQIDMPVTQAVYSILYEQVPVEIAIQDMLDREPGAETD</sequence>
<gene>
    <name evidence="1" type="primary">gpsA</name>
    <name type="ordered locus">NE2208</name>
</gene>
<comment type="function">
    <text evidence="1">Catalyzes the reduction of the glycolytic intermediate dihydroxyacetone phosphate (DHAP) to sn-glycerol 3-phosphate (G3P), the key precursor for phospholipid synthesis.</text>
</comment>
<comment type="catalytic activity">
    <reaction evidence="1">
        <text>sn-glycerol 3-phosphate + NAD(+) = dihydroxyacetone phosphate + NADH + H(+)</text>
        <dbReference type="Rhea" id="RHEA:11092"/>
        <dbReference type="ChEBI" id="CHEBI:15378"/>
        <dbReference type="ChEBI" id="CHEBI:57540"/>
        <dbReference type="ChEBI" id="CHEBI:57597"/>
        <dbReference type="ChEBI" id="CHEBI:57642"/>
        <dbReference type="ChEBI" id="CHEBI:57945"/>
        <dbReference type="EC" id="1.1.1.94"/>
    </reaction>
    <physiologicalReaction direction="right-to-left" evidence="1">
        <dbReference type="Rhea" id="RHEA:11094"/>
    </physiologicalReaction>
</comment>
<comment type="catalytic activity">
    <reaction evidence="1">
        <text>sn-glycerol 3-phosphate + NADP(+) = dihydroxyacetone phosphate + NADPH + H(+)</text>
        <dbReference type="Rhea" id="RHEA:11096"/>
        <dbReference type="ChEBI" id="CHEBI:15378"/>
        <dbReference type="ChEBI" id="CHEBI:57597"/>
        <dbReference type="ChEBI" id="CHEBI:57642"/>
        <dbReference type="ChEBI" id="CHEBI:57783"/>
        <dbReference type="ChEBI" id="CHEBI:58349"/>
        <dbReference type="EC" id="1.1.1.94"/>
    </reaction>
    <physiologicalReaction direction="right-to-left" evidence="1">
        <dbReference type="Rhea" id="RHEA:11098"/>
    </physiologicalReaction>
</comment>
<comment type="pathway">
    <text evidence="1">Membrane lipid metabolism; glycerophospholipid metabolism.</text>
</comment>
<comment type="subcellular location">
    <subcellularLocation>
        <location evidence="1">Cytoplasm</location>
    </subcellularLocation>
</comment>
<comment type="similarity">
    <text evidence="1">Belongs to the NAD-dependent glycerol-3-phosphate dehydrogenase family.</text>
</comment>
<feature type="chain" id="PRO_0000138000" description="Glycerol-3-phosphate dehydrogenase [NAD(P)+]">
    <location>
        <begin position="1"/>
        <end position="329"/>
    </location>
</feature>
<feature type="active site" description="Proton acceptor" evidence="1">
    <location>
        <position position="187"/>
    </location>
</feature>
<feature type="binding site" evidence="1">
    <location>
        <position position="11"/>
    </location>
    <ligand>
        <name>NADPH</name>
        <dbReference type="ChEBI" id="CHEBI:57783"/>
    </ligand>
</feature>
<feature type="binding site" evidence="1">
    <location>
        <position position="30"/>
    </location>
    <ligand>
        <name>NADPH</name>
        <dbReference type="ChEBI" id="CHEBI:57783"/>
    </ligand>
</feature>
<feature type="binding site" evidence="1">
    <location>
        <position position="103"/>
    </location>
    <ligand>
        <name>NADPH</name>
        <dbReference type="ChEBI" id="CHEBI:57783"/>
    </ligand>
</feature>
<feature type="binding site" evidence="1">
    <location>
        <position position="103"/>
    </location>
    <ligand>
        <name>sn-glycerol 3-phosphate</name>
        <dbReference type="ChEBI" id="CHEBI:57597"/>
    </ligand>
</feature>
<feature type="binding site" evidence="1">
    <location>
        <position position="132"/>
    </location>
    <ligand>
        <name>sn-glycerol 3-phosphate</name>
        <dbReference type="ChEBI" id="CHEBI:57597"/>
    </ligand>
</feature>
<feature type="binding site" evidence="1">
    <location>
        <position position="134"/>
    </location>
    <ligand>
        <name>sn-glycerol 3-phosphate</name>
        <dbReference type="ChEBI" id="CHEBI:57597"/>
    </ligand>
</feature>
<feature type="binding site" evidence="1">
    <location>
        <position position="136"/>
    </location>
    <ligand>
        <name>NADPH</name>
        <dbReference type="ChEBI" id="CHEBI:57783"/>
    </ligand>
</feature>
<feature type="binding site" evidence="1">
    <location>
        <position position="187"/>
    </location>
    <ligand>
        <name>sn-glycerol 3-phosphate</name>
        <dbReference type="ChEBI" id="CHEBI:57597"/>
    </ligand>
</feature>
<feature type="binding site" evidence="1">
    <location>
        <position position="240"/>
    </location>
    <ligand>
        <name>sn-glycerol 3-phosphate</name>
        <dbReference type="ChEBI" id="CHEBI:57597"/>
    </ligand>
</feature>
<feature type="binding site" evidence="1">
    <location>
        <position position="250"/>
    </location>
    <ligand>
        <name>sn-glycerol 3-phosphate</name>
        <dbReference type="ChEBI" id="CHEBI:57597"/>
    </ligand>
</feature>
<feature type="binding site" evidence="1">
    <location>
        <position position="251"/>
    </location>
    <ligand>
        <name>NADPH</name>
        <dbReference type="ChEBI" id="CHEBI:57783"/>
    </ligand>
</feature>
<feature type="binding site" evidence="1">
    <location>
        <position position="251"/>
    </location>
    <ligand>
        <name>sn-glycerol 3-phosphate</name>
        <dbReference type="ChEBI" id="CHEBI:57597"/>
    </ligand>
</feature>
<feature type="binding site" evidence="1">
    <location>
        <position position="252"/>
    </location>
    <ligand>
        <name>sn-glycerol 3-phosphate</name>
        <dbReference type="ChEBI" id="CHEBI:57597"/>
    </ligand>
</feature>
<feature type="binding site" evidence="1">
    <location>
        <position position="275"/>
    </location>
    <ligand>
        <name>NADPH</name>
        <dbReference type="ChEBI" id="CHEBI:57783"/>
    </ligand>
</feature>
<feature type="binding site" evidence="1">
    <location>
        <position position="277"/>
    </location>
    <ligand>
        <name>NADPH</name>
        <dbReference type="ChEBI" id="CHEBI:57783"/>
    </ligand>
</feature>
<organism>
    <name type="scientific">Nitrosomonas europaea (strain ATCC 19718 / CIP 103999 / KCTC 2705 / NBRC 14298)</name>
    <dbReference type="NCBI Taxonomy" id="228410"/>
    <lineage>
        <taxon>Bacteria</taxon>
        <taxon>Pseudomonadati</taxon>
        <taxon>Pseudomonadota</taxon>
        <taxon>Betaproteobacteria</taxon>
        <taxon>Nitrosomonadales</taxon>
        <taxon>Nitrosomonadaceae</taxon>
        <taxon>Nitrosomonas</taxon>
    </lineage>
</organism>
<dbReference type="EC" id="1.1.1.94" evidence="1"/>
<dbReference type="EMBL" id="AL954747">
    <property type="protein sequence ID" value="CAD86120.1"/>
    <property type="molecule type" value="Genomic_DNA"/>
</dbReference>
<dbReference type="RefSeq" id="WP_011112701.1">
    <property type="nucleotide sequence ID" value="NC_004757.1"/>
</dbReference>
<dbReference type="SMR" id="Q82SU6"/>
<dbReference type="STRING" id="228410.NE2208"/>
<dbReference type="GeneID" id="87105343"/>
<dbReference type="KEGG" id="neu:NE2208"/>
<dbReference type="eggNOG" id="COG0240">
    <property type="taxonomic scope" value="Bacteria"/>
</dbReference>
<dbReference type="HOGENOM" id="CLU_033449_0_2_4"/>
<dbReference type="OrthoDB" id="9812273at2"/>
<dbReference type="PhylomeDB" id="Q82SU6"/>
<dbReference type="UniPathway" id="UPA00940"/>
<dbReference type="Proteomes" id="UP000001416">
    <property type="component" value="Chromosome"/>
</dbReference>
<dbReference type="GO" id="GO:0005829">
    <property type="term" value="C:cytosol"/>
    <property type="evidence" value="ECO:0007669"/>
    <property type="project" value="TreeGrafter"/>
</dbReference>
<dbReference type="GO" id="GO:0047952">
    <property type="term" value="F:glycerol-3-phosphate dehydrogenase [NAD(P)+] activity"/>
    <property type="evidence" value="ECO:0007669"/>
    <property type="project" value="UniProtKB-UniRule"/>
</dbReference>
<dbReference type="GO" id="GO:0051287">
    <property type="term" value="F:NAD binding"/>
    <property type="evidence" value="ECO:0007669"/>
    <property type="project" value="InterPro"/>
</dbReference>
<dbReference type="GO" id="GO:0005975">
    <property type="term" value="P:carbohydrate metabolic process"/>
    <property type="evidence" value="ECO:0007669"/>
    <property type="project" value="InterPro"/>
</dbReference>
<dbReference type="GO" id="GO:0046167">
    <property type="term" value="P:glycerol-3-phosphate biosynthetic process"/>
    <property type="evidence" value="ECO:0007669"/>
    <property type="project" value="UniProtKB-UniRule"/>
</dbReference>
<dbReference type="GO" id="GO:0046168">
    <property type="term" value="P:glycerol-3-phosphate catabolic process"/>
    <property type="evidence" value="ECO:0007669"/>
    <property type="project" value="InterPro"/>
</dbReference>
<dbReference type="GO" id="GO:0006650">
    <property type="term" value="P:glycerophospholipid metabolic process"/>
    <property type="evidence" value="ECO:0007669"/>
    <property type="project" value="UniProtKB-UniRule"/>
</dbReference>
<dbReference type="GO" id="GO:0008654">
    <property type="term" value="P:phospholipid biosynthetic process"/>
    <property type="evidence" value="ECO:0007669"/>
    <property type="project" value="UniProtKB-KW"/>
</dbReference>
<dbReference type="FunFam" id="1.10.1040.10:FF:000001">
    <property type="entry name" value="Glycerol-3-phosphate dehydrogenase [NAD(P)+]"/>
    <property type="match status" value="1"/>
</dbReference>
<dbReference type="FunFam" id="3.40.50.720:FF:000019">
    <property type="entry name" value="Glycerol-3-phosphate dehydrogenase [NAD(P)+]"/>
    <property type="match status" value="1"/>
</dbReference>
<dbReference type="Gene3D" id="1.10.1040.10">
    <property type="entry name" value="N-(1-d-carboxylethyl)-l-norvaline Dehydrogenase, domain 2"/>
    <property type="match status" value="1"/>
</dbReference>
<dbReference type="Gene3D" id="3.40.50.720">
    <property type="entry name" value="NAD(P)-binding Rossmann-like Domain"/>
    <property type="match status" value="1"/>
</dbReference>
<dbReference type="HAMAP" id="MF_00394">
    <property type="entry name" value="NAD_Glyc3P_dehydrog"/>
    <property type="match status" value="1"/>
</dbReference>
<dbReference type="InterPro" id="IPR008927">
    <property type="entry name" value="6-PGluconate_DH-like_C_sf"/>
</dbReference>
<dbReference type="InterPro" id="IPR013328">
    <property type="entry name" value="6PGD_dom2"/>
</dbReference>
<dbReference type="InterPro" id="IPR006168">
    <property type="entry name" value="G3P_DH_NAD-dep"/>
</dbReference>
<dbReference type="InterPro" id="IPR006109">
    <property type="entry name" value="G3P_DH_NAD-dep_C"/>
</dbReference>
<dbReference type="InterPro" id="IPR011128">
    <property type="entry name" value="G3P_DH_NAD-dep_N"/>
</dbReference>
<dbReference type="InterPro" id="IPR036291">
    <property type="entry name" value="NAD(P)-bd_dom_sf"/>
</dbReference>
<dbReference type="NCBIfam" id="NF000940">
    <property type="entry name" value="PRK00094.1-2"/>
    <property type="match status" value="1"/>
</dbReference>
<dbReference type="NCBIfam" id="NF000942">
    <property type="entry name" value="PRK00094.1-4"/>
    <property type="match status" value="1"/>
</dbReference>
<dbReference type="PANTHER" id="PTHR11728">
    <property type="entry name" value="GLYCEROL-3-PHOSPHATE DEHYDROGENASE"/>
    <property type="match status" value="1"/>
</dbReference>
<dbReference type="PANTHER" id="PTHR11728:SF1">
    <property type="entry name" value="GLYCEROL-3-PHOSPHATE DEHYDROGENASE [NAD(+)] 2, CHLOROPLASTIC"/>
    <property type="match status" value="1"/>
</dbReference>
<dbReference type="Pfam" id="PF07479">
    <property type="entry name" value="NAD_Gly3P_dh_C"/>
    <property type="match status" value="1"/>
</dbReference>
<dbReference type="Pfam" id="PF01210">
    <property type="entry name" value="NAD_Gly3P_dh_N"/>
    <property type="match status" value="1"/>
</dbReference>
<dbReference type="PIRSF" id="PIRSF000114">
    <property type="entry name" value="Glycerol-3-P_dh"/>
    <property type="match status" value="1"/>
</dbReference>
<dbReference type="PRINTS" id="PR00077">
    <property type="entry name" value="GPDHDRGNASE"/>
</dbReference>
<dbReference type="SUPFAM" id="SSF48179">
    <property type="entry name" value="6-phosphogluconate dehydrogenase C-terminal domain-like"/>
    <property type="match status" value="1"/>
</dbReference>
<dbReference type="SUPFAM" id="SSF51735">
    <property type="entry name" value="NAD(P)-binding Rossmann-fold domains"/>
    <property type="match status" value="1"/>
</dbReference>
<dbReference type="PROSITE" id="PS00957">
    <property type="entry name" value="NAD_G3PDH"/>
    <property type="match status" value="1"/>
</dbReference>
<reference key="1">
    <citation type="journal article" date="2003" name="J. Bacteriol.">
        <title>Complete genome sequence of the ammonia-oxidizing bacterium and obligate chemolithoautotroph Nitrosomonas europaea.</title>
        <authorList>
            <person name="Chain P."/>
            <person name="Lamerdin J.E."/>
            <person name="Larimer F.W."/>
            <person name="Regala W."/>
            <person name="Lao V."/>
            <person name="Land M.L."/>
            <person name="Hauser L."/>
            <person name="Hooper A.B."/>
            <person name="Klotz M.G."/>
            <person name="Norton J."/>
            <person name="Sayavedra-Soto L.A."/>
            <person name="Arciero D.M."/>
            <person name="Hommes N.G."/>
            <person name="Whittaker M.M."/>
            <person name="Arp D.J."/>
        </authorList>
    </citation>
    <scope>NUCLEOTIDE SEQUENCE [LARGE SCALE GENOMIC DNA]</scope>
    <source>
        <strain>ATCC 19718 / CIP 103999 / KCTC 2705 / NBRC 14298</strain>
    </source>
</reference>
<evidence type="ECO:0000255" key="1">
    <source>
        <dbReference type="HAMAP-Rule" id="MF_00394"/>
    </source>
</evidence>